<proteinExistence type="evidence at transcript level"/>
<reference key="1">
    <citation type="journal article" date="2003" name="Toxicon">
        <title>Molecular cloning and characterization of Phoneutria nigriventer toxins active on calcium channels.</title>
        <authorList>
            <person name="Cardoso F.C."/>
            <person name="Pacifico L.G."/>
            <person name="Carvalho D.C."/>
            <person name="Victoria J.M.N."/>
            <person name="Neves A.L.G."/>
            <person name="Chavez-Olortegui C."/>
            <person name="Gomez M.V."/>
            <person name="Kalapothakis E."/>
        </authorList>
    </citation>
    <scope>NUCLEOTIDE SEQUENCE [MRNA]</scope>
    <source>
        <tissue>Venom gland</tissue>
    </source>
</reference>
<keyword id="KW-1015">Disulfide bond</keyword>
<keyword id="KW-0960">Knottin</keyword>
<keyword id="KW-0528">Neurotoxin</keyword>
<keyword id="KW-0964">Secreted</keyword>
<keyword id="KW-0732">Signal</keyword>
<keyword id="KW-0800">Toxin</keyword>
<protein>
    <recommendedName>
        <fullName>U11-ctenitoxin-Pn1a</fullName>
        <shortName>U11-CNTX-Pn1a</shortName>
    </recommendedName>
    <alternativeName>
        <fullName>Neurotoxin Pn3-6A</fullName>
    </alternativeName>
</protein>
<evidence type="ECO:0000250" key="1"/>
<evidence type="ECO:0000255" key="2"/>
<evidence type="ECO:0000305" key="3"/>
<name>TX90C_PHONI</name>
<feature type="signal peptide" evidence="2">
    <location>
        <begin position="1"/>
        <end position="21"/>
    </location>
</feature>
<feature type="propeptide" id="PRO_0000284874" evidence="1">
    <location>
        <begin position="22"/>
        <end position="34"/>
    </location>
</feature>
<feature type="chain" id="PRO_0000284875" description="U11-ctenitoxin-Pn1a">
    <location>
        <begin position="36"/>
        <end position="93"/>
    </location>
</feature>
<feature type="disulfide bond" evidence="3">
    <location>
        <begin position="37"/>
        <end position="51"/>
    </location>
</feature>
<feature type="disulfide bond" evidence="3">
    <location>
        <begin position="44"/>
        <end position="57"/>
    </location>
</feature>
<feature type="disulfide bond" evidence="3">
    <location>
        <begin position="50"/>
        <end position="75"/>
    </location>
</feature>
<feature type="disulfide bond" evidence="3">
    <location>
        <begin position="59"/>
        <end position="73"/>
    </location>
</feature>
<feature type="disulfide bond" evidence="3">
    <location>
        <begin position="83"/>
        <end position="90"/>
    </location>
</feature>
<comment type="function">
    <text>Probable neurotoxin.</text>
</comment>
<comment type="subcellular location">
    <subcellularLocation>
        <location evidence="1">Secreted</location>
    </subcellularLocation>
</comment>
<comment type="tissue specificity">
    <text>Expressed by the venom gland.</text>
</comment>
<comment type="domain">
    <text evidence="3">The presence of a 'disulfide through disulfide knot' structurally defines this protein as a knottin.</text>
</comment>
<comment type="similarity">
    <text evidence="3">Belongs to the neurotoxin 09 (Tx3-6) family.</text>
</comment>
<organism>
    <name type="scientific">Phoneutria nigriventer</name>
    <name type="common">Brazilian armed spider</name>
    <name type="synonym">Ctenus nigriventer</name>
    <dbReference type="NCBI Taxonomy" id="6918"/>
    <lineage>
        <taxon>Eukaryota</taxon>
        <taxon>Metazoa</taxon>
        <taxon>Ecdysozoa</taxon>
        <taxon>Arthropoda</taxon>
        <taxon>Chelicerata</taxon>
        <taxon>Arachnida</taxon>
        <taxon>Araneae</taxon>
        <taxon>Araneomorphae</taxon>
        <taxon>Entelegynae</taxon>
        <taxon>Lycosoidea</taxon>
        <taxon>Ctenidae</taxon>
        <taxon>Phoneutria</taxon>
    </lineage>
</organism>
<dbReference type="SMR" id="P0C2S7"/>
<dbReference type="ArachnoServer" id="AS000266">
    <property type="toxin name" value="U11-ctenitoxin-Pn1a"/>
</dbReference>
<dbReference type="GO" id="GO:0005576">
    <property type="term" value="C:extracellular region"/>
    <property type="evidence" value="ECO:0007669"/>
    <property type="project" value="UniProtKB-SubCell"/>
</dbReference>
<dbReference type="GO" id="GO:0090729">
    <property type="term" value="F:toxin activity"/>
    <property type="evidence" value="ECO:0007669"/>
    <property type="project" value="UniProtKB-KW"/>
</dbReference>
<accession>P0C2S7</accession>
<sequence>MKCAVLFLSVIALVHIFVVEAEEEPDSDALVPQERACLARGETCKDDCECCDCDNQCYCPFDWFGGKWHPVGCSCAHANQYFCDHKKEKCKKA</sequence>